<protein>
    <recommendedName>
        <fullName evidence="1">Small ribosomal subunit protein uS14c</fullName>
    </recommendedName>
    <alternativeName>
        <fullName evidence="2">30S ribosomal protein S14, chloroplastic</fullName>
    </alternativeName>
</protein>
<dbReference type="EMBL" id="AF166114">
    <property type="protein sequence ID" value="AAF43835.1"/>
    <property type="molecule type" value="Genomic_DNA"/>
</dbReference>
<dbReference type="RefSeq" id="NP_038394.1">
    <property type="nucleotide sequence ID" value="NC_002186.1"/>
</dbReference>
<dbReference type="SMR" id="Q9MUR6"/>
<dbReference type="GeneID" id="800946"/>
<dbReference type="GO" id="GO:0009507">
    <property type="term" value="C:chloroplast"/>
    <property type="evidence" value="ECO:0007669"/>
    <property type="project" value="UniProtKB-SubCell"/>
</dbReference>
<dbReference type="GO" id="GO:0015935">
    <property type="term" value="C:small ribosomal subunit"/>
    <property type="evidence" value="ECO:0007669"/>
    <property type="project" value="TreeGrafter"/>
</dbReference>
<dbReference type="GO" id="GO:0019843">
    <property type="term" value="F:rRNA binding"/>
    <property type="evidence" value="ECO:0007669"/>
    <property type="project" value="UniProtKB-UniRule"/>
</dbReference>
<dbReference type="GO" id="GO:0003735">
    <property type="term" value="F:structural constituent of ribosome"/>
    <property type="evidence" value="ECO:0007669"/>
    <property type="project" value="InterPro"/>
</dbReference>
<dbReference type="GO" id="GO:0006412">
    <property type="term" value="P:translation"/>
    <property type="evidence" value="ECO:0007669"/>
    <property type="project" value="UniProtKB-UniRule"/>
</dbReference>
<dbReference type="FunFam" id="1.10.287.1480:FF:000001">
    <property type="entry name" value="30S ribosomal protein S14"/>
    <property type="match status" value="1"/>
</dbReference>
<dbReference type="Gene3D" id="1.10.287.1480">
    <property type="match status" value="1"/>
</dbReference>
<dbReference type="HAMAP" id="MF_00537">
    <property type="entry name" value="Ribosomal_uS14_1"/>
    <property type="match status" value="1"/>
</dbReference>
<dbReference type="InterPro" id="IPR001209">
    <property type="entry name" value="Ribosomal_uS14"/>
</dbReference>
<dbReference type="InterPro" id="IPR023036">
    <property type="entry name" value="Ribosomal_uS14_bac/plastid"/>
</dbReference>
<dbReference type="InterPro" id="IPR018271">
    <property type="entry name" value="Ribosomal_uS14_CS"/>
</dbReference>
<dbReference type="NCBIfam" id="NF006477">
    <property type="entry name" value="PRK08881.1"/>
    <property type="match status" value="1"/>
</dbReference>
<dbReference type="PANTHER" id="PTHR19836">
    <property type="entry name" value="30S RIBOSOMAL PROTEIN S14"/>
    <property type="match status" value="1"/>
</dbReference>
<dbReference type="PANTHER" id="PTHR19836:SF19">
    <property type="entry name" value="SMALL RIBOSOMAL SUBUNIT PROTEIN US14M"/>
    <property type="match status" value="1"/>
</dbReference>
<dbReference type="Pfam" id="PF00253">
    <property type="entry name" value="Ribosomal_S14"/>
    <property type="match status" value="1"/>
</dbReference>
<dbReference type="SUPFAM" id="SSF57716">
    <property type="entry name" value="Glucocorticoid receptor-like (DNA-binding domain)"/>
    <property type="match status" value="1"/>
</dbReference>
<dbReference type="PROSITE" id="PS00527">
    <property type="entry name" value="RIBOSOMAL_S14"/>
    <property type="match status" value="1"/>
</dbReference>
<accession>Q9MUR6</accession>
<keyword id="KW-0150">Chloroplast</keyword>
<keyword id="KW-0934">Plastid</keyword>
<keyword id="KW-0687">Ribonucleoprotein</keyword>
<keyword id="KW-0689">Ribosomal protein</keyword>
<keyword id="KW-0694">RNA-binding</keyword>
<keyword id="KW-0699">rRNA-binding</keyword>
<organism>
    <name type="scientific">Mesostigma viride</name>
    <name type="common">Green alga</name>
    <dbReference type="NCBI Taxonomy" id="41882"/>
    <lineage>
        <taxon>Eukaryota</taxon>
        <taxon>Viridiplantae</taxon>
        <taxon>Streptophyta</taxon>
        <taxon>Mesostigmatophyceae</taxon>
        <taxon>Mesostigmatales</taxon>
        <taxon>Mesostigmataceae</taxon>
        <taxon>Mesostigma</taxon>
    </lineage>
</organism>
<feature type="chain" id="PRO_0000130977" description="Small ribosomal subunit protein uS14c">
    <location>
        <begin position="1"/>
        <end position="100"/>
    </location>
</feature>
<sequence>MAKKSMIEREKKRQKLVNKYAVKRKELKEQIKTSVSFEERFKLQLELQKLPRNSSPTRLHNRCSVTGRPKGYYRDFGLSRHVLREMAHECLLPGVTKSSW</sequence>
<name>RR14_MESVI</name>
<proteinExistence type="inferred from homology"/>
<comment type="function">
    <text evidence="1">Binds 16S rRNA, required for the assembly of 30S particles.</text>
</comment>
<comment type="subunit">
    <text evidence="1">Part of the 30S ribosomal subunit.</text>
</comment>
<comment type="subcellular location">
    <subcellularLocation>
        <location>Plastid</location>
        <location>Chloroplast</location>
    </subcellularLocation>
</comment>
<comment type="similarity">
    <text evidence="1">Belongs to the universal ribosomal protein uS14 family.</text>
</comment>
<reference key="1">
    <citation type="journal article" date="2000" name="Nature">
        <title>Ancestral chloroplast genome in Mesostigma viride reveals an early branch of green plant evolution.</title>
        <authorList>
            <person name="Lemieux C."/>
            <person name="Otis C."/>
            <person name="Turmel M."/>
        </authorList>
    </citation>
    <scope>NUCLEOTIDE SEQUENCE [LARGE SCALE GENOMIC DNA]</scope>
    <source>
        <strain>NIES-296 / KY-14 / CCMP 2046</strain>
    </source>
</reference>
<evidence type="ECO:0000255" key="1">
    <source>
        <dbReference type="HAMAP-Rule" id="MF_00537"/>
    </source>
</evidence>
<evidence type="ECO:0000305" key="2"/>
<gene>
    <name evidence="1" type="primary">rps14</name>
</gene>
<geneLocation type="chloroplast"/>